<name>CLXN_XENLA</name>
<sequence length="208" mass="24165">MNRKNLQKQAEALSRLIKHFSKSEVESLIRLYHTLVGRPGDPNTRRGIDRNTFRNILHNTFGMTDDMIMDRVFRGFDKDNDSFISVTEWVEGLSVFLHGTLEEKIKYCFGVYDLNGDGYISREEMFHMLKNSLLKQPSEEDPDEGVKDLVEIALKKMDYDHDSKLSYTDFEKAVQEENLLLEAFGTCLPDSKCIMAFERQAFTEMNDI</sequence>
<reference key="1">
    <citation type="submission" date="2005-10" db="EMBL/GenBank/DDBJ databases">
        <authorList>
            <consortium name="NIH - Xenopus Gene Collection (XGC) project"/>
        </authorList>
    </citation>
    <scope>NUCLEOTIDE SEQUENCE [LARGE SCALE MRNA]</scope>
    <source>
        <tissue>Testis</tissue>
    </source>
</reference>
<keyword id="KW-0106">Calcium</keyword>
<keyword id="KW-0966">Cell projection</keyword>
<keyword id="KW-0969">Cilium</keyword>
<keyword id="KW-0963">Cytoplasm</keyword>
<keyword id="KW-0206">Cytoskeleton</keyword>
<keyword id="KW-0282">Flagellum</keyword>
<keyword id="KW-0479">Metal-binding</keyword>
<keyword id="KW-1185">Reference proteome</keyword>
<keyword id="KW-0677">Repeat</keyword>
<feature type="chain" id="PRO_0000251971" description="Calaxin">
    <location>
        <begin position="1"/>
        <end position="208"/>
    </location>
</feature>
<feature type="domain" description="EF-hand 1" evidence="5">
    <location>
        <begin position="64"/>
        <end position="99"/>
    </location>
</feature>
<feature type="domain" description="EF-hand 2" evidence="5">
    <location>
        <begin position="100"/>
        <end position="135"/>
    </location>
</feature>
<feature type="domain" description="EF-hand 3" evidence="5">
    <location>
        <begin position="145"/>
        <end position="180"/>
    </location>
</feature>
<feature type="binding site" evidence="6">
    <location>
        <position position="77"/>
    </location>
    <ligand>
        <name>Ca(2+)</name>
        <dbReference type="ChEBI" id="CHEBI:29108"/>
        <label>1</label>
    </ligand>
</feature>
<feature type="binding site" evidence="6">
    <location>
        <position position="79"/>
    </location>
    <ligand>
        <name>Ca(2+)</name>
        <dbReference type="ChEBI" id="CHEBI:29108"/>
        <label>1</label>
    </ligand>
</feature>
<feature type="binding site" evidence="6">
    <location>
        <position position="81"/>
    </location>
    <ligand>
        <name>Ca(2+)</name>
        <dbReference type="ChEBI" id="CHEBI:29108"/>
        <label>1</label>
    </ligand>
</feature>
<feature type="binding site" evidence="5">
    <location>
        <position position="113"/>
    </location>
    <ligand>
        <name>Ca(2+)</name>
        <dbReference type="ChEBI" id="CHEBI:29108"/>
        <label>2</label>
    </ligand>
</feature>
<feature type="binding site" evidence="5">
    <location>
        <position position="115"/>
    </location>
    <ligand>
        <name>Ca(2+)</name>
        <dbReference type="ChEBI" id="CHEBI:29108"/>
        <label>2</label>
    </ligand>
</feature>
<feature type="binding site" evidence="5">
    <location>
        <position position="117"/>
    </location>
    <ligand>
        <name>Ca(2+)</name>
        <dbReference type="ChEBI" id="CHEBI:29108"/>
        <label>2</label>
    </ligand>
</feature>
<feature type="binding site" evidence="5">
    <location>
        <position position="119"/>
    </location>
    <ligand>
        <name>Ca(2+)</name>
        <dbReference type="ChEBI" id="CHEBI:29108"/>
        <label>2</label>
    </ligand>
</feature>
<feature type="binding site" evidence="5">
    <location>
        <position position="124"/>
    </location>
    <ligand>
        <name>Ca(2+)</name>
        <dbReference type="ChEBI" id="CHEBI:29108"/>
        <label>2</label>
    </ligand>
</feature>
<feature type="binding site" evidence="6">
    <location>
        <position position="158"/>
    </location>
    <ligand>
        <name>Ca(2+)</name>
        <dbReference type="ChEBI" id="CHEBI:29108"/>
        <label>3</label>
    </ligand>
</feature>
<feature type="binding site" evidence="6">
    <location>
        <position position="160"/>
    </location>
    <ligand>
        <name>Ca(2+)</name>
        <dbReference type="ChEBI" id="CHEBI:29108"/>
        <label>3</label>
    </ligand>
</feature>
<feature type="binding site" evidence="6">
    <location>
        <position position="162"/>
    </location>
    <ligand>
        <name>Ca(2+)</name>
        <dbReference type="ChEBI" id="CHEBI:29108"/>
        <label>3</label>
    </ligand>
</feature>
<feature type="binding site" evidence="6">
    <location>
        <position position="164"/>
    </location>
    <ligand>
        <name>Ca(2+)</name>
        <dbReference type="ChEBI" id="CHEBI:29108"/>
        <label>3</label>
    </ligand>
</feature>
<feature type="binding site" evidence="6">
    <location>
        <position position="169"/>
    </location>
    <ligand>
        <name>Ca(2+)</name>
        <dbReference type="ChEBI" id="CHEBI:29108"/>
        <label>3</label>
    </ligand>
</feature>
<evidence type="ECO:0000250" key="1">
    <source>
        <dbReference type="UniProtKB" id="Q32L26"/>
    </source>
</evidence>
<evidence type="ECO:0000250" key="2">
    <source>
        <dbReference type="UniProtKB" id="Q96M63"/>
    </source>
</evidence>
<evidence type="ECO:0000250" key="3">
    <source>
        <dbReference type="UniProtKB" id="Q9D3N2"/>
    </source>
</evidence>
<evidence type="ECO:0000250" key="4">
    <source>
        <dbReference type="UniProtKB" id="Q9HAE3"/>
    </source>
</evidence>
<evidence type="ECO:0000255" key="5">
    <source>
        <dbReference type="PROSITE-ProRule" id="PRU00448"/>
    </source>
</evidence>
<evidence type="ECO:0000305" key="6"/>
<dbReference type="EMBL" id="BC106351">
    <property type="protein sequence ID" value="AAI06352.1"/>
    <property type="molecule type" value="mRNA"/>
</dbReference>
<dbReference type="RefSeq" id="NP_001089695.1">
    <property type="nucleotide sequence ID" value="NM_001096226.1"/>
</dbReference>
<dbReference type="SMR" id="Q3KQ77"/>
<dbReference type="DNASU" id="734757"/>
<dbReference type="GeneID" id="734757"/>
<dbReference type="KEGG" id="xla:734757"/>
<dbReference type="AGR" id="Xenbase:XB-GENE-5727581"/>
<dbReference type="CTD" id="734757"/>
<dbReference type="Xenbase" id="XB-GENE-5727581">
    <property type="gene designation" value="clxn.S"/>
</dbReference>
<dbReference type="OrthoDB" id="191686at2759"/>
<dbReference type="Proteomes" id="UP000186698">
    <property type="component" value="Chromosome 6S"/>
</dbReference>
<dbReference type="Bgee" id="734757">
    <property type="expression patterns" value="Expressed in testis and 19 other cell types or tissues"/>
</dbReference>
<dbReference type="GO" id="GO:0005929">
    <property type="term" value="C:cilium"/>
    <property type="evidence" value="ECO:0000250"/>
    <property type="project" value="UniProtKB"/>
</dbReference>
<dbReference type="GO" id="GO:0005737">
    <property type="term" value="C:cytoplasm"/>
    <property type="evidence" value="ECO:0007669"/>
    <property type="project" value="UniProtKB-KW"/>
</dbReference>
<dbReference type="GO" id="GO:0005856">
    <property type="term" value="C:cytoskeleton"/>
    <property type="evidence" value="ECO:0007669"/>
    <property type="project" value="UniProtKB-KW"/>
</dbReference>
<dbReference type="GO" id="GO:0036126">
    <property type="term" value="C:sperm flagellum"/>
    <property type="evidence" value="ECO:0000250"/>
    <property type="project" value="UniProtKB"/>
</dbReference>
<dbReference type="GO" id="GO:0005509">
    <property type="term" value="F:calcium ion binding"/>
    <property type="evidence" value="ECO:0000318"/>
    <property type="project" value="GO_Central"/>
</dbReference>
<dbReference type="GO" id="GO:0003341">
    <property type="term" value="P:cilium movement"/>
    <property type="evidence" value="ECO:0000250"/>
    <property type="project" value="UniProtKB"/>
</dbReference>
<dbReference type="GO" id="GO:0036158">
    <property type="term" value="P:outer dynein arm assembly"/>
    <property type="evidence" value="ECO:0000250"/>
    <property type="project" value="UniProtKB"/>
</dbReference>
<dbReference type="GO" id="GO:0003352">
    <property type="term" value="P:regulation of cilium movement"/>
    <property type="evidence" value="ECO:0000250"/>
    <property type="project" value="UniProtKB"/>
</dbReference>
<dbReference type="GO" id="GO:1901317">
    <property type="term" value="P:regulation of flagellated sperm motility"/>
    <property type="evidence" value="ECO:0000250"/>
    <property type="project" value="UniProtKB"/>
</dbReference>
<dbReference type="GO" id="GO:0009966">
    <property type="term" value="P:regulation of signal transduction"/>
    <property type="evidence" value="ECO:0000318"/>
    <property type="project" value="GO_Central"/>
</dbReference>
<dbReference type="CDD" id="cd00051">
    <property type="entry name" value="EFh"/>
    <property type="match status" value="2"/>
</dbReference>
<dbReference type="Gene3D" id="1.10.238.10">
    <property type="entry name" value="EF-hand"/>
    <property type="match status" value="1"/>
</dbReference>
<dbReference type="InterPro" id="IPR011992">
    <property type="entry name" value="EF-hand-dom_pair"/>
</dbReference>
<dbReference type="InterPro" id="IPR018247">
    <property type="entry name" value="EF_Hand_1_Ca_BS"/>
</dbReference>
<dbReference type="InterPro" id="IPR002048">
    <property type="entry name" value="EF_hand_dom"/>
</dbReference>
<dbReference type="InterPro" id="IPR028846">
    <property type="entry name" value="Recoverin"/>
</dbReference>
<dbReference type="PANTHER" id="PTHR23055:SF60">
    <property type="entry name" value="CALAXIN"/>
    <property type="match status" value="1"/>
</dbReference>
<dbReference type="PANTHER" id="PTHR23055">
    <property type="entry name" value="CALCIUM BINDING PROTEINS"/>
    <property type="match status" value="1"/>
</dbReference>
<dbReference type="Pfam" id="PF13499">
    <property type="entry name" value="EF-hand_7"/>
    <property type="match status" value="1"/>
</dbReference>
<dbReference type="PRINTS" id="PR00450">
    <property type="entry name" value="RECOVERIN"/>
</dbReference>
<dbReference type="SMART" id="SM00054">
    <property type="entry name" value="EFh"/>
    <property type="match status" value="3"/>
</dbReference>
<dbReference type="SUPFAM" id="SSF47473">
    <property type="entry name" value="EF-hand"/>
    <property type="match status" value="1"/>
</dbReference>
<dbReference type="PROSITE" id="PS00018">
    <property type="entry name" value="EF_HAND_1"/>
    <property type="match status" value="1"/>
</dbReference>
<dbReference type="PROSITE" id="PS50222">
    <property type="entry name" value="EF_HAND_2"/>
    <property type="match status" value="3"/>
</dbReference>
<protein>
    <recommendedName>
        <fullName evidence="3">Calaxin</fullName>
    </recommendedName>
    <alternativeName>
        <fullName>EF-hand calcium-binding domain-containing protein 1</fullName>
    </alternativeName>
</protein>
<accession>Q3KQ77</accession>
<organism>
    <name type="scientific">Xenopus laevis</name>
    <name type="common">African clawed frog</name>
    <dbReference type="NCBI Taxonomy" id="8355"/>
    <lineage>
        <taxon>Eukaryota</taxon>
        <taxon>Metazoa</taxon>
        <taxon>Chordata</taxon>
        <taxon>Craniata</taxon>
        <taxon>Vertebrata</taxon>
        <taxon>Euteleostomi</taxon>
        <taxon>Amphibia</taxon>
        <taxon>Batrachia</taxon>
        <taxon>Anura</taxon>
        <taxon>Pipoidea</taxon>
        <taxon>Pipidae</taxon>
        <taxon>Xenopodinae</taxon>
        <taxon>Xenopus</taxon>
        <taxon>Xenopus</taxon>
    </lineage>
</organism>
<gene>
    <name type="primary">clxn</name>
    <name type="synonym">efcab1</name>
</gene>
<comment type="function">
    <text evidence="1 3">Component of the outer dynein arm-docking complex (ODA-DC) that mediates outer dynein arms (ODA) binding onto the doublet microtubule. Seems to regulate the assembly of both ODAs and their axonemal docking complex onto ciliary microtubules (By similarity). Regulates ciliary and flagellar motility and is required for cilia-driven determination of body laterality (By similarity).</text>
</comment>
<comment type="subunit">
    <text evidence="1">Component of the outer dynein arm-docking complex along with ODAD1, ODAD2, ODAD3 and ODAD4.</text>
</comment>
<comment type="subcellular location">
    <subcellularLocation>
        <location evidence="2">Cytoplasm</location>
        <location evidence="2">Cytoskeleton</location>
        <location evidence="2">Cilium axoneme</location>
    </subcellularLocation>
    <subcellularLocation>
        <location evidence="4">Cell projection</location>
        <location evidence="4">Cilium</location>
    </subcellularLocation>
    <subcellularLocation>
        <location evidence="4">Cell projection</location>
        <location evidence="4">Cilium</location>
        <location evidence="4">Flagellum</location>
    </subcellularLocation>
</comment>
<proteinExistence type="evidence at transcript level"/>